<accession>P83264</accession>
<evidence type="ECO:0000256" key="1">
    <source>
        <dbReference type="SAM" id="MobiDB-lite"/>
    </source>
</evidence>
<evidence type="ECO:0000269" key="2">
    <source>
    </source>
</evidence>
<evidence type="ECO:0000305" key="3"/>
<reference evidence="3" key="1">
    <citation type="journal article" date="1998" name="Comp. Biochem. Physiol.">
        <title>Primary structure of scombrine alpha: two different species with an identical protamine.</title>
        <authorList>
            <person name="Buesa C."/>
            <person name="del Valle L."/>
            <person name="Saperas N."/>
            <person name="Goethals M."/>
            <person name="Lloris D."/>
            <person name="Chiva M."/>
        </authorList>
    </citation>
    <scope>PROTEIN SEQUENCE OF 2-35</scope>
    <scope>FUNCTION</scope>
    <scope>SUBCELLULAR LOCATION</scope>
    <scope>TISSUE SPECIFICITY</scope>
    <scope>PHOSPHORYLATION AT SER-9 AND SER-21</scope>
    <scope>MASS SPECTROMETRY OF UNPHOSPHORYLATED FORM</scope>
    <source>
        <tissue>Sperm</tissue>
    </source>
</reference>
<comment type="function">
    <text evidence="2">Protamines substitute for histones in the chromatin of sperm during the haploid phase of spermatogenesis. They compact sperm DNA into a highly condensed, stable and inactive complex.</text>
</comment>
<comment type="subcellular location">
    <subcellularLocation>
        <location evidence="2">Nucleus</location>
    </subcellularLocation>
    <subcellularLocation>
        <location evidence="2">Chromosome</location>
    </subcellularLocation>
</comment>
<comment type="tissue specificity">
    <text evidence="2">Gonads.</text>
</comment>
<comment type="PTM">
    <text evidence="2">Phosphorylated in immature sperm. Dephosphorylated in mature sperm allowing a stronger interaction with DNA.</text>
</comment>
<comment type="mass spectrometry" mass="4537.3" method="Electrospray" evidence="2">
    <text>Unphosphorylated.</text>
</comment>
<comment type="miscellaneous">
    <text evidence="2">Two isoforms exist, a major form and a minor form. This is the major form.</text>
</comment>
<keyword id="KW-0158">Chromosome</keyword>
<keyword id="KW-0217">Developmental protein</keyword>
<keyword id="KW-0221">Differentiation</keyword>
<keyword id="KW-0903">Direct protein sequencing</keyword>
<keyword id="KW-0226">DNA condensation</keyword>
<keyword id="KW-0238">DNA-binding</keyword>
<keyword id="KW-0544">Nucleosome core</keyword>
<keyword id="KW-0539">Nucleus</keyword>
<keyword id="KW-0597">Phosphoprotein</keyword>
<keyword id="KW-0744">Spermatogenesis</keyword>
<sequence length="35" mass="4665">MPRRRRRASRPVRRRRRARRSTAVRRRRRVVRRRR</sequence>
<protein>
    <recommendedName>
        <fullName>Sperm protamine alpha isoform 1</fullName>
    </recommendedName>
    <alternativeName>
        <fullName>Scombrine alpha-1</fullName>
    </alternativeName>
</protein>
<name>PRT1_SCOSC</name>
<feature type="initiator methionine" description="Removed" evidence="2">
    <location>
        <position position="1"/>
    </location>
</feature>
<feature type="peptide" id="PRO_0000044848" description="Sperm protamine alpha isoform 1">
    <location>
        <begin position="2"/>
        <end position="35"/>
    </location>
</feature>
<feature type="region of interest" description="Disordered" evidence="1">
    <location>
        <begin position="1"/>
        <end position="35"/>
    </location>
</feature>
<feature type="modified residue" description="Phosphoserine" evidence="2">
    <location>
        <position position="9"/>
    </location>
</feature>
<feature type="modified residue" description="Phosphoserine" evidence="2">
    <location>
        <position position="21"/>
    </location>
</feature>
<proteinExistence type="evidence at protein level"/>
<dbReference type="iPTMnet" id="P83264"/>
<dbReference type="GO" id="GO:0000786">
    <property type="term" value="C:nucleosome"/>
    <property type="evidence" value="ECO:0000304"/>
    <property type="project" value="UniProtKB"/>
</dbReference>
<dbReference type="GO" id="GO:0005634">
    <property type="term" value="C:nucleus"/>
    <property type="evidence" value="ECO:0000304"/>
    <property type="project" value="UniProtKB"/>
</dbReference>
<dbReference type="GO" id="GO:0003677">
    <property type="term" value="F:DNA binding"/>
    <property type="evidence" value="ECO:0000304"/>
    <property type="project" value="UniProtKB"/>
</dbReference>
<dbReference type="GO" id="GO:0030154">
    <property type="term" value="P:cell differentiation"/>
    <property type="evidence" value="ECO:0007669"/>
    <property type="project" value="UniProtKB-KW"/>
</dbReference>
<dbReference type="GO" id="GO:0007076">
    <property type="term" value="P:mitotic chromosome condensation"/>
    <property type="evidence" value="ECO:0000304"/>
    <property type="project" value="UniProtKB"/>
</dbReference>
<dbReference type="GO" id="GO:0006334">
    <property type="term" value="P:nucleosome assembly"/>
    <property type="evidence" value="ECO:0000304"/>
    <property type="project" value="UniProtKB"/>
</dbReference>
<dbReference type="GO" id="GO:0007283">
    <property type="term" value="P:spermatogenesis"/>
    <property type="evidence" value="ECO:0000304"/>
    <property type="project" value="UniProtKB"/>
</dbReference>
<organism evidence="3">
    <name type="scientific">Scomber scombrus</name>
    <name type="common">Atlantic mackerel</name>
    <name type="synonym">Scomber vernalis</name>
    <dbReference type="NCBI Taxonomy" id="13677"/>
    <lineage>
        <taxon>Eukaryota</taxon>
        <taxon>Metazoa</taxon>
        <taxon>Chordata</taxon>
        <taxon>Craniata</taxon>
        <taxon>Vertebrata</taxon>
        <taxon>Euteleostomi</taxon>
        <taxon>Actinopterygii</taxon>
        <taxon>Neopterygii</taxon>
        <taxon>Teleostei</taxon>
        <taxon>Neoteleostei</taxon>
        <taxon>Acanthomorphata</taxon>
        <taxon>Pelagiaria</taxon>
        <taxon>Scombriformes</taxon>
        <taxon>Scombridae</taxon>
        <taxon>Scomber</taxon>
    </lineage>
</organism>